<dbReference type="EMBL" id="AE016958">
    <property type="protein sequence ID" value="AAS06403.1"/>
    <property type="molecule type" value="Genomic_DNA"/>
</dbReference>
<dbReference type="RefSeq" id="WP_003879241.1">
    <property type="nucleotide sequence ID" value="NZ_CP106873.1"/>
</dbReference>
<dbReference type="SMR" id="Q73T66"/>
<dbReference type="STRING" id="262316.MAP_3853"/>
<dbReference type="KEGG" id="mpa:MAP_3853"/>
<dbReference type="PATRIC" id="fig|262316.17.peg.4102"/>
<dbReference type="eggNOG" id="COG0542">
    <property type="taxonomic scope" value="Bacteria"/>
</dbReference>
<dbReference type="HOGENOM" id="CLU_005070_4_0_11"/>
<dbReference type="Proteomes" id="UP000000580">
    <property type="component" value="Chromosome"/>
</dbReference>
<dbReference type="GO" id="GO:0005737">
    <property type="term" value="C:cytoplasm"/>
    <property type="evidence" value="ECO:0007669"/>
    <property type="project" value="UniProtKB-SubCell"/>
</dbReference>
<dbReference type="GO" id="GO:0005524">
    <property type="term" value="F:ATP binding"/>
    <property type="evidence" value="ECO:0007669"/>
    <property type="project" value="UniProtKB-KW"/>
</dbReference>
<dbReference type="GO" id="GO:0016887">
    <property type="term" value="F:ATP hydrolysis activity"/>
    <property type="evidence" value="ECO:0007669"/>
    <property type="project" value="InterPro"/>
</dbReference>
<dbReference type="GO" id="GO:0034605">
    <property type="term" value="P:cellular response to heat"/>
    <property type="evidence" value="ECO:0007669"/>
    <property type="project" value="TreeGrafter"/>
</dbReference>
<dbReference type="GO" id="GO:0042026">
    <property type="term" value="P:protein refolding"/>
    <property type="evidence" value="ECO:0007669"/>
    <property type="project" value="InterPro"/>
</dbReference>
<dbReference type="CDD" id="cd00009">
    <property type="entry name" value="AAA"/>
    <property type="match status" value="1"/>
</dbReference>
<dbReference type="CDD" id="cd19499">
    <property type="entry name" value="RecA-like_ClpB_Hsp104-like"/>
    <property type="match status" value="1"/>
</dbReference>
<dbReference type="FunFam" id="1.10.8.60:FF:000017">
    <property type="entry name" value="ATP-dependent chaperone ClpB"/>
    <property type="match status" value="1"/>
</dbReference>
<dbReference type="FunFam" id="3.40.50.300:FF:000120">
    <property type="entry name" value="ATP-dependent chaperone ClpB"/>
    <property type="match status" value="1"/>
</dbReference>
<dbReference type="FunFam" id="3.40.50.300:FF:000025">
    <property type="entry name" value="ATP-dependent Clp protease subunit"/>
    <property type="match status" value="1"/>
</dbReference>
<dbReference type="FunFam" id="3.40.50.300:FF:000010">
    <property type="entry name" value="Chaperone clpB 1, putative"/>
    <property type="match status" value="1"/>
</dbReference>
<dbReference type="Gene3D" id="1.10.8.60">
    <property type="match status" value="1"/>
</dbReference>
<dbReference type="Gene3D" id="1.10.1780.10">
    <property type="entry name" value="Clp, N-terminal domain"/>
    <property type="match status" value="1"/>
</dbReference>
<dbReference type="Gene3D" id="3.40.50.300">
    <property type="entry name" value="P-loop containing nucleotide triphosphate hydrolases"/>
    <property type="match status" value="3"/>
</dbReference>
<dbReference type="InterPro" id="IPR003593">
    <property type="entry name" value="AAA+_ATPase"/>
</dbReference>
<dbReference type="InterPro" id="IPR003959">
    <property type="entry name" value="ATPase_AAA_core"/>
</dbReference>
<dbReference type="InterPro" id="IPR017730">
    <property type="entry name" value="Chaperonin_ClpB"/>
</dbReference>
<dbReference type="InterPro" id="IPR019489">
    <property type="entry name" value="Clp_ATPase_C"/>
</dbReference>
<dbReference type="InterPro" id="IPR036628">
    <property type="entry name" value="Clp_N_dom_sf"/>
</dbReference>
<dbReference type="InterPro" id="IPR004176">
    <property type="entry name" value="Clp_R_dom"/>
</dbReference>
<dbReference type="InterPro" id="IPR001270">
    <property type="entry name" value="ClpA/B"/>
</dbReference>
<dbReference type="InterPro" id="IPR018368">
    <property type="entry name" value="ClpA/B_CS1"/>
</dbReference>
<dbReference type="InterPro" id="IPR028299">
    <property type="entry name" value="ClpA/B_CS2"/>
</dbReference>
<dbReference type="InterPro" id="IPR041546">
    <property type="entry name" value="ClpA/ClpB_AAA_lid"/>
</dbReference>
<dbReference type="InterPro" id="IPR050130">
    <property type="entry name" value="ClpA_ClpB"/>
</dbReference>
<dbReference type="InterPro" id="IPR027417">
    <property type="entry name" value="P-loop_NTPase"/>
</dbReference>
<dbReference type="NCBIfam" id="TIGR03346">
    <property type="entry name" value="chaperone_ClpB"/>
    <property type="match status" value="1"/>
</dbReference>
<dbReference type="PANTHER" id="PTHR11638">
    <property type="entry name" value="ATP-DEPENDENT CLP PROTEASE"/>
    <property type="match status" value="1"/>
</dbReference>
<dbReference type="PANTHER" id="PTHR11638:SF18">
    <property type="entry name" value="HEAT SHOCK PROTEIN 104"/>
    <property type="match status" value="1"/>
</dbReference>
<dbReference type="Pfam" id="PF00004">
    <property type="entry name" value="AAA"/>
    <property type="match status" value="1"/>
</dbReference>
<dbReference type="Pfam" id="PF07724">
    <property type="entry name" value="AAA_2"/>
    <property type="match status" value="1"/>
</dbReference>
<dbReference type="Pfam" id="PF17871">
    <property type="entry name" value="AAA_lid_9"/>
    <property type="match status" value="1"/>
</dbReference>
<dbReference type="Pfam" id="PF02861">
    <property type="entry name" value="Clp_N"/>
    <property type="match status" value="2"/>
</dbReference>
<dbReference type="Pfam" id="PF10431">
    <property type="entry name" value="ClpB_D2-small"/>
    <property type="match status" value="1"/>
</dbReference>
<dbReference type="PRINTS" id="PR00300">
    <property type="entry name" value="CLPPROTEASEA"/>
</dbReference>
<dbReference type="SMART" id="SM00382">
    <property type="entry name" value="AAA"/>
    <property type="match status" value="2"/>
</dbReference>
<dbReference type="SMART" id="SM01086">
    <property type="entry name" value="ClpB_D2-small"/>
    <property type="match status" value="1"/>
</dbReference>
<dbReference type="SUPFAM" id="SSF81923">
    <property type="entry name" value="Double Clp-N motif"/>
    <property type="match status" value="1"/>
</dbReference>
<dbReference type="SUPFAM" id="SSF52540">
    <property type="entry name" value="P-loop containing nucleoside triphosphate hydrolases"/>
    <property type="match status" value="2"/>
</dbReference>
<dbReference type="PROSITE" id="PS51903">
    <property type="entry name" value="CLP_R"/>
    <property type="match status" value="1"/>
</dbReference>
<dbReference type="PROSITE" id="PS00870">
    <property type="entry name" value="CLPAB_1"/>
    <property type="match status" value="1"/>
</dbReference>
<dbReference type="PROSITE" id="PS00871">
    <property type="entry name" value="CLPAB_2"/>
    <property type="match status" value="1"/>
</dbReference>
<comment type="function">
    <text evidence="1">Part of a stress-induced multi-chaperone system, it is involved in the recovery of the cell from heat-induced damage, in cooperation with DnaK, DnaJ and GrpE. Acts before DnaK, in the processing of protein aggregates. Protein binding stimulates the ATPase activity; ATP hydrolysis unfolds the denatured protein aggregates, which probably helps expose new hydrophobic binding sites on the surface of ClpB-bound aggregates, contributing to the solubilization and refolding of denatured protein aggregates by DnaK (By similarity).</text>
</comment>
<comment type="subunit">
    <text evidence="1">Homohexamer. The oligomerization is ATP-dependent (By similarity).</text>
</comment>
<comment type="subcellular location">
    <subcellularLocation>
        <location evidence="3">Cytoplasm</location>
    </subcellularLocation>
</comment>
<comment type="domain">
    <text evidence="1">The Clp repeat (R) domain probably functions as a substrate-discriminating domain, recruiting aggregated proteins to the ClpB hexamer and/or stabilizing bound proteins. The NBD2 domain is responsible for oligomerization, whereas the NBD1 domain stabilizes the hexamer probably in an ATP-dependent manner. The movement of the coiled-coil domain is essential for ClpB ability to rescue proteins from an aggregated state, probably by pulling apart large aggregated proteins, which are bound between the coiled-coils motifs of adjacent ClpB subunits in the functional hexamer (By similarity).</text>
</comment>
<comment type="similarity">
    <text evidence="3">Belongs to the ClpA/ClpB family.</text>
</comment>
<evidence type="ECO:0000250" key="1"/>
<evidence type="ECO:0000255" key="2">
    <source>
        <dbReference type="PROSITE-ProRule" id="PRU01251"/>
    </source>
</evidence>
<evidence type="ECO:0000305" key="3"/>
<name>CLPB_MYCPA</name>
<sequence length="848" mass="92631">MDSFNPTTKTQAALTAALQAASAAGNPEIRPAHLLMALLTQADGIAAPLLEAVGVEPATIRAEAERMLARLPQASGASSQPQLSRESLAAITTAQHLATELDDEYVSTEHLMVGLATGDSDVAKLLTGHGASPQALREAFVKVRGSARVTSPDPEATYQALEKYSTDLTARAREGKLDPVIGRDNEIRRVVQVLSRRTKNNPVLIGEPGVGKTAIVEGLAQRIVAGDVPESLRDKTVIALDLGSMVAGAKYRGEFEERLKAVLDDIKNSAGQIITFIDELHTIVGAGATGEGAMDAGNMIKPMLARGELRLVGATTLDEYRKYIEKDAALERRFQQVFVGEPSVEDTVGILRGLKDRYEVHHGVRITDSALVAAATLSDRYITARFLPDKAIDLVDEAASRLKMEIDSRPVEIDEVERLVRRLEIEEMALAKEEDEASKERLEKLRSELADQKEKLAELTTRWQNEKNAIDVVRELKEQLETLRGESDRAERDGDLAKAAELRYGRIPEVEKKLEAALPQAEARENVMLKEEVGPDDIAEVVSAWTGIPAGRMLEGETAKLLRMEDELGKRVVGQKRAVQAVSDAVRRARAGVADPNRPTGSFMFLGPTGVGKTELAKALADFLFDDKRAMVRIDMSEYGEKHSVARLVGAPPGYIGYDQGGQLTEAVRRRPYTVILFDEIEKAHPDVFDVLLQVLDEGRLTDGQGRTVDFRNTILILTSNLGSGGSEEQVMAAVRSAFKPEFINRLDDVIIFHGLEPGELVQIVDIQLAQLQKRLAQRRLTLEVSLPAKQWLAHRGFDPVYGARPLRRLVQQAIGDQLAKQLLAGQVHDGDTVPVNVSPDGDSLILG</sequence>
<feature type="chain" id="PRO_0000191143" description="Chaperone protein ClpB">
    <location>
        <begin position="1"/>
        <end position="848"/>
    </location>
</feature>
<feature type="domain" description="Clp R" evidence="2">
    <location>
        <begin position="1"/>
        <end position="146"/>
    </location>
</feature>
<feature type="region of interest" description="Repeat 1" evidence="2">
    <location>
        <begin position="6"/>
        <end position="71"/>
    </location>
</feature>
<feature type="region of interest" description="Repeat 2" evidence="2">
    <location>
        <begin position="83"/>
        <end position="146"/>
    </location>
</feature>
<feature type="region of interest" description="NBD1" evidence="1">
    <location>
        <begin position="159"/>
        <end position="341"/>
    </location>
</feature>
<feature type="region of interest" description="Linker" evidence="1">
    <location>
        <begin position="342"/>
        <end position="547"/>
    </location>
</feature>
<feature type="region of interest" description="NBD2" evidence="1">
    <location>
        <begin position="557"/>
        <end position="755"/>
    </location>
</feature>
<feature type="region of interest" description="C-terminal" evidence="1">
    <location>
        <begin position="756"/>
        <end position="848"/>
    </location>
</feature>
<feature type="coiled-coil region" evidence="1">
    <location>
        <begin position="392"/>
        <end position="526"/>
    </location>
</feature>
<feature type="binding site" evidence="1">
    <location>
        <begin position="206"/>
        <end position="213"/>
    </location>
    <ligand>
        <name>ATP</name>
        <dbReference type="ChEBI" id="CHEBI:30616"/>
        <label>1</label>
    </ligand>
</feature>
<feature type="binding site" evidence="1">
    <location>
        <begin position="607"/>
        <end position="614"/>
    </location>
    <ligand>
        <name>ATP</name>
        <dbReference type="ChEBI" id="CHEBI:30616"/>
        <label>2</label>
    </ligand>
</feature>
<gene>
    <name type="primary">clpB</name>
    <name type="ordered locus">MAP_3853</name>
</gene>
<reference key="1">
    <citation type="journal article" date="2005" name="Proc. Natl. Acad. Sci. U.S.A.">
        <title>The complete genome sequence of Mycobacterium avium subspecies paratuberculosis.</title>
        <authorList>
            <person name="Li L."/>
            <person name="Bannantine J.P."/>
            <person name="Zhang Q."/>
            <person name="Amonsin A."/>
            <person name="May B.J."/>
            <person name="Alt D."/>
            <person name="Banerji N."/>
            <person name="Kanjilal S."/>
            <person name="Kapur V."/>
        </authorList>
    </citation>
    <scope>NUCLEOTIDE SEQUENCE [LARGE SCALE GENOMIC DNA]</scope>
    <source>
        <strain>ATCC BAA-968 / K-10</strain>
    </source>
</reference>
<protein>
    <recommendedName>
        <fullName>Chaperone protein ClpB</fullName>
    </recommendedName>
</protein>
<accession>Q73T66</accession>
<organism>
    <name type="scientific">Mycolicibacterium paratuberculosis (strain ATCC BAA-968 / K-10)</name>
    <name type="common">Mycobacterium paratuberculosis</name>
    <dbReference type="NCBI Taxonomy" id="262316"/>
    <lineage>
        <taxon>Bacteria</taxon>
        <taxon>Bacillati</taxon>
        <taxon>Actinomycetota</taxon>
        <taxon>Actinomycetes</taxon>
        <taxon>Mycobacteriales</taxon>
        <taxon>Mycobacteriaceae</taxon>
        <taxon>Mycobacterium</taxon>
        <taxon>Mycobacterium avium complex (MAC)</taxon>
    </lineage>
</organism>
<keyword id="KW-0067">ATP-binding</keyword>
<keyword id="KW-0143">Chaperone</keyword>
<keyword id="KW-0175">Coiled coil</keyword>
<keyword id="KW-0963">Cytoplasm</keyword>
<keyword id="KW-0547">Nucleotide-binding</keyword>
<keyword id="KW-1185">Reference proteome</keyword>
<keyword id="KW-0677">Repeat</keyword>
<keyword id="KW-0346">Stress response</keyword>
<proteinExistence type="inferred from homology"/>